<evidence type="ECO:0000250" key="1"/>
<evidence type="ECO:0000250" key="2">
    <source>
        <dbReference type="UniProtKB" id="Q96S95"/>
    </source>
</evidence>
<evidence type="ECO:0000250" key="3">
    <source>
        <dbReference type="UniProtKB" id="Q9Z2N6"/>
    </source>
</evidence>
<evidence type="ECO:0000256" key="4">
    <source>
        <dbReference type="SAM" id="MobiDB-lite"/>
    </source>
</evidence>
<evidence type="ECO:0000269" key="5">
    <source>
    </source>
</evidence>
<evidence type="ECO:0000305" key="6"/>
<gene>
    <name type="primary">Camk2n2</name>
</gene>
<feature type="chain" id="PRO_0000327267" description="Calcium/calmodulin-dependent protein kinase II inhibitor 2">
    <location>
        <begin position="1"/>
        <end position="79"/>
    </location>
</feature>
<feature type="region of interest" description="Disordered" evidence="4">
    <location>
        <begin position="1"/>
        <end position="21"/>
    </location>
</feature>
<feature type="region of interest" description="Inhibitory domain" evidence="1">
    <location>
        <begin position="43"/>
        <end position="69"/>
    </location>
</feature>
<accession>Q78WH7</accession>
<keyword id="KW-0963">Cytoplasm</keyword>
<keyword id="KW-0539">Nucleus</keyword>
<keyword id="KW-0649">Protein kinase inhibitor</keyword>
<keyword id="KW-1185">Reference proteome</keyword>
<keyword id="KW-0770">Synapse</keyword>
<proteinExistence type="evidence at protein level"/>
<sequence length="79" mass="8628">MSEILPYGEDKMGRFGADPEGSDLSFSCRLQDTNSFFAGNQAKRPPKLGQIGRAKRVVIEDDRIDDVLKGMGEKPPSGV</sequence>
<comment type="function">
    <text evidence="2 3">Potent and specific cellular inhibitor of CaM-kinase II (CAMK2) (By similarity). Traps Ca(2+)/calmodulin on CAMK2 (By similarity).</text>
</comment>
<comment type="subunit">
    <text evidence="3">Interacts with CAMK2A and CAMK2B in the presence of Ca(2+)/calmodulin or after autophosphorylation.</text>
</comment>
<comment type="subcellular location">
    <subcellularLocation>
        <location evidence="3">Nucleus</location>
    </subcellularLocation>
    <subcellularLocation>
        <location evidence="3">Cytoplasm</location>
        <location evidence="3">Cytosol</location>
    </subcellularLocation>
    <subcellularLocation>
        <location evidence="5">Synapse</location>
    </subcellularLocation>
    <text evidence="3">Excluded from nucleus when coexpressed with activated CAMK2.</text>
</comment>
<comment type="similarity">
    <text evidence="6">Belongs to the CAMK2N family.</text>
</comment>
<reference key="1">
    <citation type="journal article" date="2005" name="Science">
        <title>The transcriptional landscape of the mammalian genome.</title>
        <authorList>
            <person name="Carninci P."/>
            <person name="Kasukawa T."/>
            <person name="Katayama S."/>
            <person name="Gough J."/>
            <person name="Frith M.C."/>
            <person name="Maeda N."/>
            <person name="Oyama R."/>
            <person name="Ravasi T."/>
            <person name="Lenhard B."/>
            <person name="Wells C."/>
            <person name="Kodzius R."/>
            <person name="Shimokawa K."/>
            <person name="Bajic V.B."/>
            <person name="Brenner S.E."/>
            <person name="Batalov S."/>
            <person name="Forrest A.R."/>
            <person name="Zavolan M."/>
            <person name="Davis M.J."/>
            <person name="Wilming L.G."/>
            <person name="Aidinis V."/>
            <person name="Allen J.E."/>
            <person name="Ambesi-Impiombato A."/>
            <person name="Apweiler R."/>
            <person name="Aturaliya R.N."/>
            <person name="Bailey T.L."/>
            <person name="Bansal M."/>
            <person name="Baxter L."/>
            <person name="Beisel K.W."/>
            <person name="Bersano T."/>
            <person name="Bono H."/>
            <person name="Chalk A.M."/>
            <person name="Chiu K.P."/>
            <person name="Choudhary V."/>
            <person name="Christoffels A."/>
            <person name="Clutterbuck D.R."/>
            <person name="Crowe M.L."/>
            <person name="Dalla E."/>
            <person name="Dalrymple B.P."/>
            <person name="de Bono B."/>
            <person name="Della Gatta G."/>
            <person name="di Bernardo D."/>
            <person name="Down T."/>
            <person name="Engstrom P."/>
            <person name="Fagiolini M."/>
            <person name="Faulkner G."/>
            <person name="Fletcher C.F."/>
            <person name="Fukushima T."/>
            <person name="Furuno M."/>
            <person name="Futaki S."/>
            <person name="Gariboldi M."/>
            <person name="Georgii-Hemming P."/>
            <person name="Gingeras T.R."/>
            <person name="Gojobori T."/>
            <person name="Green R.E."/>
            <person name="Gustincich S."/>
            <person name="Harbers M."/>
            <person name="Hayashi Y."/>
            <person name="Hensch T.K."/>
            <person name="Hirokawa N."/>
            <person name="Hill D."/>
            <person name="Huminiecki L."/>
            <person name="Iacono M."/>
            <person name="Ikeo K."/>
            <person name="Iwama A."/>
            <person name="Ishikawa T."/>
            <person name="Jakt M."/>
            <person name="Kanapin A."/>
            <person name="Katoh M."/>
            <person name="Kawasawa Y."/>
            <person name="Kelso J."/>
            <person name="Kitamura H."/>
            <person name="Kitano H."/>
            <person name="Kollias G."/>
            <person name="Krishnan S.P."/>
            <person name="Kruger A."/>
            <person name="Kummerfeld S.K."/>
            <person name="Kurochkin I.V."/>
            <person name="Lareau L.F."/>
            <person name="Lazarevic D."/>
            <person name="Lipovich L."/>
            <person name="Liu J."/>
            <person name="Liuni S."/>
            <person name="McWilliam S."/>
            <person name="Madan Babu M."/>
            <person name="Madera M."/>
            <person name="Marchionni L."/>
            <person name="Matsuda H."/>
            <person name="Matsuzawa S."/>
            <person name="Miki H."/>
            <person name="Mignone F."/>
            <person name="Miyake S."/>
            <person name="Morris K."/>
            <person name="Mottagui-Tabar S."/>
            <person name="Mulder N."/>
            <person name="Nakano N."/>
            <person name="Nakauchi H."/>
            <person name="Ng P."/>
            <person name="Nilsson R."/>
            <person name="Nishiguchi S."/>
            <person name="Nishikawa S."/>
            <person name="Nori F."/>
            <person name="Ohara O."/>
            <person name="Okazaki Y."/>
            <person name="Orlando V."/>
            <person name="Pang K.C."/>
            <person name="Pavan W.J."/>
            <person name="Pavesi G."/>
            <person name="Pesole G."/>
            <person name="Petrovsky N."/>
            <person name="Piazza S."/>
            <person name="Reed J."/>
            <person name="Reid J.F."/>
            <person name="Ring B.Z."/>
            <person name="Ringwald M."/>
            <person name="Rost B."/>
            <person name="Ruan Y."/>
            <person name="Salzberg S.L."/>
            <person name="Sandelin A."/>
            <person name="Schneider C."/>
            <person name="Schoenbach C."/>
            <person name="Sekiguchi K."/>
            <person name="Semple C.A."/>
            <person name="Seno S."/>
            <person name="Sessa L."/>
            <person name="Sheng Y."/>
            <person name="Shibata Y."/>
            <person name="Shimada H."/>
            <person name="Shimada K."/>
            <person name="Silva D."/>
            <person name="Sinclair B."/>
            <person name="Sperling S."/>
            <person name="Stupka E."/>
            <person name="Sugiura K."/>
            <person name="Sultana R."/>
            <person name="Takenaka Y."/>
            <person name="Taki K."/>
            <person name="Tammoja K."/>
            <person name="Tan S.L."/>
            <person name="Tang S."/>
            <person name="Taylor M.S."/>
            <person name="Tegner J."/>
            <person name="Teichmann S.A."/>
            <person name="Ueda H.R."/>
            <person name="van Nimwegen E."/>
            <person name="Verardo R."/>
            <person name="Wei C.L."/>
            <person name="Yagi K."/>
            <person name="Yamanishi H."/>
            <person name="Zabarovsky E."/>
            <person name="Zhu S."/>
            <person name="Zimmer A."/>
            <person name="Hide W."/>
            <person name="Bult C."/>
            <person name="Grimmond S.M."/>
            <person name="Teasdale R.D."/>
            <person name="Liu E.T."/>
            <person name="Brusic V."/>
            <person name="Quackenbush J."/>
            <person name="Wahlestedt C."/>
            <person name="Mattick J.S."/>
            <person name="Hume D.A."/>
            <person name="Kai C."/>
            <person name="Sasaki D."/>
            <person name="Tomaru Y."/>
            <person name="Fukuda S."/>
            <person name="Kanamori-Katayama M."/>
            <person name="Suzuki M."/>
            <person name="Aoki J."/>
            <person name="Arakawa T."/>
            <person name="Iida J."/>
            <person name="Imamura K."/>
            <person name="Itoh M."/>
            <person name="Kato T."/>
            <person name="Kawaji H."/>
            <person name="Kawagashira N."/>
            <person name="Kawashima T."/>
            <person name="Kojima M."/>
            <person name="Kondo S."/>
            <person name="Konno H."/>
            <person name="Nakano K."/>
            <person name="Ninomiya N."/>
            <person name="Nishio T."/>
            <person name="Okada M."/>
            <person name="Plessy C."/>
            <person name="Shibata K."/>
            <person name="Shiraki T."/>
            <person name="Suzuki S."/>
            <person name="Tagami M."/>
            <person name="Waki K."/>
            <person name="Watahiki A."/>
            <person name="Okamura-Oho Y."/>
            <person name="Suzuki H."/>
            <person name="Kawai J."/>
            <person name="Hayashizaki Y."/>
        </authorList>
    </citation>
    <scope>NUCLEOTIDE SEQUENCE [LARGE SCALE MRNA]</scope>
    <source>
        <strain>C57BL/6J</strain>
        <tissue>Hippocampus</tissue>
    </source>
</reference>
<reference key="2">
    <citation type="journal article" date="2010" name="Cell">
        <title>A tissue-specific atlas of mouse protein phosphorylation and expression.</title>
        <authorList>
            <person name="Huttlin E.L."/>
            <person name="Jedrychowski M.P."/>
            <person name="Elias J.E."/>
            <person name="Goswami T."/>
            <person name="Rad R."/>
            <person name="Beausoleil S.A."/>
            <person name="Villen J."/>
            <person name="Haas W."/>
            <person name="Sowa M.E."/>
            <person name="Gygi S.P."/>
        </authorList>
    </citation>
    <scope>IDENTIFICATION BY MASS SPECTROMETRY [LARGE SCALE ANALYSIS]</scope>
    <source>
        <tissue>Brain</tissue>
    </source>
</reference>
<reference key="3">
    <citation type="journal article" date="2017" name="Sci. Rep.">
        <title>Prevention of long-term memory loss after retrieval by an endogenous CaMKII inhibitor.</title>
        <authorList>
            <person name="Vigil F.A."/>
            <person name="Mizuno K."/>
            <person name="Lucchesi W."/>
            <person name="Valls-Comamala V."/>
            <person name="Giese K.P."/>
        </authorList>
    </citation>
    <scope>SUBCELLULAR LOCATION</scope>
</reference>
<protein>
    <recommendedName>
        <fullName>Calcium/calmodulin-dependent protein kinase II inhibitor 2</fullName>
    </recommendedName>
    <alternativeName>
        <fullName>CaM-KII inhibitory protein</fullName>
        <shortName>CaM-KIIN</shortName>
    </alternativeName>
</protein>
<organism>
    <name type="scientific">Mus musculus</name>
    <name type="common">Mouse</name>
    <dbReference type="NCBI Taxonomy" id="10090"/>
    <lineage>
        <taxon>Eukaryota</taxon>
        <taxon>Metazoa</taxon>
        <taxon>Chordata</taxon>
        <taxon>Craniata</taxon>
        <taxon>Vertebrata</taxon>
        <taxon>Euteleostomi</taxon>
        <taxon>Mammalia</taxon>
        <taxon>Eutheria</taxon>
        <taxon>Euarchontoglires</taxon>
        <taxon>Glires</taxon>
        <taxon>Rodentia</taxon>
        <taxon>Myomorpha</taxon>
        <taxon>Muroidea</taxon>
        <taxon>Muridae</taxon>
        <taxon>Murinae</taxon>
        <taxon>Mus</taxon>
        <taxon>Mus</taxon>
    </lineage>
</organism>
<name>CK2N2_MOUSE</name>
<dbReference type="EMBL" id="AK013788">
    <property type="protein sequence ID" value="BAB28995.1"/>
    <property type="molecule type" value="mRNA"/>
</dbReference>
<dbReference type="CCDS" id="CCDS49795.1"/>
<dbReference type="RefSeq" id="NP_082696.1">
    <property type="nucleotide sequence ID" value="NM_028420.2"/>
</dbReference>
<dbReference type="FunCoup" id="Q78WH7">
    <property type="interactions" value="171"/>
</dbReference>
<dbReference type="STRING" id="10090.ENSMUSP00000057368"/>
<dbReference type="iPTMnet" id="Q78WH7"/>
<dbReference type="PhosphoSitePlus" id="Q78WH7"/>
<dbReference type="PaxDb" id="10090-ENSMUSP00000057368"/>
<dbReference type="ProteomicsDB" id="283857"/>
<dbReference type="Pumba" id="Q78WH7"/>
<dbReference type="Antibodypedia" id="33806">
    <property type="antibodies" value="64 antibodies from 17 providers"/>
</dbReference>
<dbReference type="Ensembl" id="ENSMUST00000052939.4">
    <property type="protein sequence ID" value="ENSMUSP00000057368.3"/>
    <property type="gene ID" value="ENSMUSG00000051146.4"/>
</dbReference>
<dbReference type="GeneID" id="73047"/>
<dbReference type="KEGG" id="mmu:73047"/>
<dbReference type="UCSC" id="uc007yqk.2">
    <property type="organism name" value="mouse"/>
</dbReference>
<dbReference type="AGR" id="MGI:1920297"/>
<dbReference type="CTD" id="94032"/>
<dbReference type="MGI" id="MGI:1920297">
    <property type="gene designation" value="Camk2n2"/>
</dbReference>
<dbReference type="VEuPathDB" id="HostDB:ENSMUSG00000051146"/>
<dbReference type="eggNOG" id="ENOG502S4FG">
    <property type="taxonomic scope" value="Eukaryota"/>
</dbReference>
<dbReference type="GeneTree" id="ENSGT00390000004940"/>
<dbReference type="HOGENOM" id="CLU_197183_0_0_1"/>
<dbReference type="InParanoid" id="Q78WH7"/>
<dbReference type="OMA" id="MSEIMPY"/>
<dbReference type="OrthoDB" id="9922824at2759"/>
<dbReference type="PhylomeDB" id="Q78WH7"/>
<dbReference type="TreeFam" id="TF333175"/>
<dbReference type="BioGRID-ORCS" id="73047">
    <property type="hits" value="1 hit in 78 CRISPR screens"/>
</dbReference>
<dbReference type="PRO" id="PR:Q78WH7"/>
<dbReference type="Proteomes" id="UP000000589">
    <property type="component" value="Chromosome 16"/>
</dbReference>
<dbReference type="RNAct" id="Q78WH7">
    <property type="molecule type" value="protein"/>
</dbReference>
<dbReference type="Bgee" id="ENSMUSG00000051146">
    <property type="expression patterns" value="Expressed in superior colliculus and 136 other cell types or tissues"/>
</dbReference>
<dbReference type="ExpressionAtlas" id="Q78WH7">
    <property type="expression patterns" value="baseline and differential"/>
</dbReference>
<dbReference type="GO" id="GO:0005829">
    <property type="term" value="C:cytosol"/>
    <property type="evidence" value="ECO:0007669"/>
    <property type="project" value="UniProtKB-SubCell"/>
</dbReference>
<dbReference type="GO" id="GO:0005634">
    <property type="term" value="C:nucleus"/>
    <property type="evidence" value="ECO:0007669"/>
    <property type="project" value="UniProtKB-SubCell"/>
</dbReference>
<dbReference type="GO" id="GO:0045202">
    <property type="term" value="C:synapse"/>
    <property type="evidence" value="ECO:0000314"/>
    <property type="project" value="UniProtKB"/>
</dbReference>
<dbReference type="GO" id="GO:0008427">
    <property type="term" value="F:calcium-dependent protein kinase inhibitor activity"/>
    <property type="evidence" value="ECO:0000314"/>
    <property type="project" value="MGI"/>
</dbReference>
<dbReference type="GO" id="GO:0019901">
    <property type="term" value="F:protein kinase binding"/>
    <property type="evidence" value="ECO:0007669"/>
    <property type="project" value="Ensembl"/>
</dbReference>
<dbReference type="InterPro" id="IPR026779">
    <property type="entry name" value="Camk2n"/>
</dbReference>
<dbReference type="PANTHER" id="PTHR31007">
    <property type="entry name" value="CALCIUM/CALMODULIN-DEPENDENT PROTEIN KINASE II INHIBITOR 2"/>
    <property type="match status" value="1"/>
</dbReference>
<dbReference type="PANTHER" id="PTHR31007:SF1">
    <property type="entry name" value="CALCIUM_CALMODULIN-DEPENDENT PROTEIN KINASE II INHIBITOR 2"/>
    <property type="match status" value="1"/>
</dbReference>
<dbReference type="Pfam" id="PF15170">
    <property type="entry name" value="CaM-KIIN"/>
    <property type="match status" value="1"/>
</dbReference>